<accession>O27696</accession>
<gene>
    <name type="primary">trpB1</name>
    <name type="synonym">trpB</name>
    <name type="ordered locus">MTH_1659</name>
</gene>
<sequence length="392" mass="42527">MIMDGKFGKYGGIFVPELLIPALEELERAFLHYRDDRKFMAELEYHLREYAGKPTGLYYARNLSEKLGCRVYLKREDMLHTGAHKINNTIGQALLARYMGKTRIIAETGAGQHGIATAAAGALFGMDVDIYMGTEDVERQKLNVFRMEVSGAEVIPVDSGSRTLKDAINEAMRDWISNVDDTHYLIGSTMGPHPYPTMVKHFQSVIGREAREQILEVEGELPDTVIACVGGGSNAIGIFSAFMDDDVELIGAEGGGEGIESGNHGATLSAGSEGILHGSLSYVLQDGDGQISEAHSVSAGLDYPGVGPEHAHLMDTGRARYEPVTDTEALRGFRLLSRYEGIMPALESAHAIACLERYAEKPENRGKTVIVNLSGRGDKDMFMVAGLLGVGV</sequence>
<evidence type="ECO:0000250" key="1"/>
<evidence type="ECO:0000305" key="2"/>
<name>TRPB1_METTH</name>
<proteinExistence type="inferred from homology"/>
<dbReference type="EC" id="4.2.1.20"/>
<dbReference type="EMBL" id="AE000666">
    <property type="protein sequence ID" value="AAB86131.1"/>
    <property type="molecule type" value="Genomic_DNA"/>
</dbReference>
<dbReference type="PIR" id="G69088">
    <property type="entry name" value="G69088"/>
</dbReference>
<dbReference type="RefSeq" id="WP_010877267.1">
    <property type="nucleotide sequence ID" value="NC_000916.1"/>
</dbReference>
<dbReference type="SMR" id="O27696"/>
<dbReference type="FunCoup" id="O27696">
    <property type="interactions" value="132"/>
</dbReference>
<dbReference type="STRING" id="187420.MTH_1659"/>
<dbReference type="PaxDb" id="187420-MTH_1659"/>
<dbReference type="EnsemblBacteria" id="AAB86131">
    <property type="protein sequence ID" value="AAB86131"/>
    <property type="gene ID" value="MTH_1659"/>
</dbReference>
<dbReference type="GeneID" id="1470744"/>
<dbReference type="KEGG" id="mth:MTH_1659"/>
<dbReference type="PATRIC" id="fig|187420.15.peg.1621"/>
<dbReference type="HOGENOM" id="CLU_016734_3_1_2"/>
<dbReference type="InParanoid" id="O27696"/>
<dbReference type="UniPathway" id="UPA00035">
    <property type="reaction ID" value="UER00044"/>
</dbReference>
<dbReference type="Proteomes" id="UP000005223">
    <property type="component" value="Chromosome"/>
</dbReference>
<dbReference type="GO" id="GO:0005737">
    <property type="term" value="C:cytoplasm"/>
    <property type="evidence" value="ECO:0007669"/>
    <property type="project" value="TreeGrafter"/>
</dbReference>
<dbReference type="GO" id="GO:0004834">
    <property type="term" value="F:tryptophan synthase activity"/>
    <property type="evidence" value="ECO:0007669"/>
    <property type="project" value="UniProtKB-UniRule"/>
</dbReference>
<dbReference type="CDD" id="cd06446">
    <property type="entry name" value="Trp-synth_B"/>
    <property type="match status" value="1"/>
</dbReference>
<dbReference type="FunFam" id="3.40.50.1100:FF:000001">
    <property type="entry name" value="Tryptophan synthase beta chain"/>
    <property type="match status" value="1"/>
</dbReference>
<dbReference type="FunFam" id="3.40.50.1100:FF:000004">
    <property type="entry name" value="Tryptophan synthase beta chain"/>
    <property type="match status" value="1"/>
</dbReference>
<dbReference type="Gene3D" id="3.40.50.1100">
    <property type="match status" value="2"/>
</dbReference>
<dbReference type="HAMAP" id="MF_00133">
    <property type="entry name" value="Trp_synth_beta"/>
    <property type="match status" value="1"/>
</dbReference>
<dbReference type="InterPro" id="IPR006653">
    <property type="entry name" value="Trp_synth_b_CS"/>
</dbReference>
<dbReference type="InterPro" id="IPR006654">
    <property type="entry name" value="Trp_synth_beta"/>
</dbReference>
<dbReference type="InterPro" id="IPR023026">
    <property type="entry name" value="Trp_synth_beta/beta-like"/>
</dbReference>
<dbReference type="InterPro" id="IPR001926">
    <property type="entry name" value="TrpB-like_PALP"/>
</dbReference>
<dbReference type="InterPro" id="IPR036052">
    <property type="entry name" value="TrpB-like_PALP_sf"/>
</dbReference>
<dbReference type="NCBIfam" id="TIGR00263">
    <property type="entry name" value="trpB"/>
    <property type="match status" value="1"/>
</dbReference>
<dbReference type="PANTHER" id="PTHR48077:SF3">
    <property type="entry name" value="TRYPTOPHAN SYNTHASE"/>
    <property type="match status" value="1"/>
</dbReference>
<dbReference type="PANTHER" id="PTHR48077">
    <property type="entry name" value="TRYPTOPHAN SYNTHASE-RELATED"/>
    <property type="match status" value="1"/>
</dbReference>
<dbReference type="Pfam" id="PF00291">
    <property type="entry name" value="PALP"/>
    <property type="match status" value="1"/>
</dbReference>
<dbReference type="PIRSF" id="PIRSF001413">
    <property type="entry name" value="Trp_syn_beta"/>
    <property type="match status" value="1"/>
</dbReference>
<dbReference type="SUPFAM" id="SSF53686">
    <property type="entry name" value="Tryptophan synthase beta subunit-like PLP-dependent enzymes"/>
    <property type="match status" value="1"/>
</dbReference>
<dbReference type="PROSITE" id="PS00168">
    <property type="entry name" value="TRP_SYNTHASE_BETA"/>
    <property type="match status" value="1"/>
</dbReference>
<comment type="function">
    <text evidence="1">The beta subunit is responsible for the synthesis of L-tryptophan from indole and L-serine.</text>
</comment>
<comment type="catalytic activity">
    <reaction>
        <text>(1S,2R)-1-C-(indol-3-yl)glycerol 3-phosphate + L-serine = D-glyceraldehyde 3-phosphate + L-tryptophan + H2O</text>
        <dbReference type="Rhea" id="RHEA:10532"/>
        <dbReference type="ChEBI" id="CHEBI:15377"/>
        <dbReference type="ChEBI" id="CHEBI:33384"/>
        <dbReference type="ChEBI" id="CHEBI:57912"/>
        <dbReference type="ChEBI" id="CHEBI:58866"/>
        <dbReference type="ChEBI" id="CHEBI:59776"/>
        <dbReference type="EC" id="4.2.1.20"/>
    </reaction>
</comment>
<comment type="cofactor">
    <cofactor evidence="1">
        <name>pyridoxal 5'-phosphate</name>
        <dbReference type="ChEBI" id="CHEBI:597326"/>
    </cofactor>
</comment>
<comment type="pathway">
    <text>Amino-acid biosynthesis; L-tryptophan biosynthesis; L-tryptophan from chorismate: step 5/5.</text>
</comment>
<comment type="subunit">
    <text evidence="1">Tetramer of two alpha and two beta chains.</text>
</comment>
<comment type="similarity">
    <text evidence="2">Belongs to the TrpB family.</text>
</comment>
<protein>
    <recommendedName>
        <fullName>Tryptophan synthase beta chain 1</fullName>
        <ecNumber>4.2.1.20</ecNumber>
    </recommendedName>
</protein>
<organism>
    <name type="scientific">Methanothermobacter thermautotrophicus (strain ATCC 29096 / DSM 1053 / JCM 10044 / NBRC 100330 / Delta H)</name>
    <name type="common">Methanobacterium thermoautotrophicum</name>
    <dbReference type="NCBI Taxonomy" id="187420"/>
    <lineage>
        <taxon>Archaea</taxon>
        <taxon>Methanobacteriati</taxon>
        <taxon>Methanobacteriota</taxon>
        <taxon>Methanomada group</taxon>
        <taxon>Methanobacteria</taxon>
        <taxon>Methanobacteriales</taxon>
        <taxon>Methanobacteriaceae</taxon>
        <taxon>Methanothermobacter</taxon>
    </lineage>
</organism>
<keyword id="KW-0028">Amino-acid biosynthesis</keyword>
<keyword id="KW-0057">Aromatic amino acid biosynthesis</keyword>
<keyword id="KW-0456">Lyase</keyword>
<keyword id="KW-0663">Pyridoxal phosphate</keyword>
<keyword id="KW-1185">Reference proteome</keyword>
<keyword id="KW-0822">Tryptophan biosynthesis</keyword>
<reference key="1">
    <citation type="journal article" date="1997" name="J. Bacteriol.">
        <title>Complete genome sequence of Methanobacterium thermoautotrophicum deltaH: functional analysis and comparative genomics.</title>
        <authorList>
            <person name="Smith D.R."/>
            <person name="Doucette-Stamm L.A."/>
            <person name="Deloughery C."/>
            <person name="Lee H.-M."/>
            <person name="Dubois J."/>
            <person name="Aldredge T."/>
            <person name="Bashirzadeh R."/>
            <person name="Blakely D."/>
            <person name="Cook R."/>
            <person name="Gilbert K."/>
            <person name="Harrison D."/>
            <person name="Hoang L."/>
            <person name="Keagle P."/>
            <person name="Lumm W."/>
            <person name="Pothier B."/>
            <person name="Qiu D."/>
            <person name="Spadafora R."/>
            <person name="Vicare R."/>
            <person name="Wang Y."/>
            <person name="Wierzbowski J."/>
            <person name="Gibson R."/>
            <person name="Jiwani N."/>
            <person name="Caruso A."/>
            <person name="Bush D."/>
            <person name="Safer H."/>
            <person name="Patwell D."/>
            <person name="Prabhakar S."/>
            <person name="McDougall S."/>
            <person name="Shimer G."/>
            <person name="Goyal A."/>
            <person name="Pietrovski S."/>
            <person name="Church G.M."/>
            <person name="Daniels C.J."/>
            <person name="Mao J.-I."/>
            <person name="Rice P."/>
            <person name="Noelling J."/>
            <person name="Reeve J.N."/>
        </authorList>
    </citation>
    <scope>NUCLEOTIDE SEQUENCE [LARGE SCALE GENOMIC DNA]</scope>
    <source>
        <strain>ATCC 29096 / DSM 1053 / JCM 10044 / NBRC 100330 / Delta H</strain>
    </source>
</reference>
<feature type="chain" id="PRO_0000099042" description="Tryptophan synthase beta chain 1">
    <location>
        <begin position="1"/>
        <end position="392"/>
    </location>
</feature>
<feature type="modified residue" description="N6-(pyridoxal phosphate)lysine" evidence="1">
    <location>
        <position position="85"/>
    </location>
</feature>